<organism>
    <name type="scientific">Shigella dysenteriae serotype 1 (strain Sd197)</name>
    <dbReference type="NCBI Taxonomy" id="300267"/>
    <lineage>
        <taxon>Bacteria</taxon>
        <taxon>Pseudomonadati</taxon>
        <taxon>Pseudomonadota</taxon>
        <taxon>Gammaproteobacteria</taxon>
        <taxon>Enterobacterales</taxon>
        <taxon>Enterobacteriaceae</taxon>
        <taxon>Shigella</taxon>
    </lineage>
</organism>
<reference key="1">
    <citation type="journal article" date="2005" name="Nucleic Acids Res.">
        <title>Genome dynamics and diversity of Shigella species, the etiologic agents of bacillary dysentery.</title>
        <authorList>
            <person name="Yang F."/>
            <person name="Yang J."/>
            <person name="Zhang X."/>
            <person name="Chen L."/>
            <person name="Jiang Y."/>
            <person name="Yan Y."/>
            <person name="Tang X."/>
            <person name="Wang J."/>
            <person name="Xiong Z."/>
            <person name="Dong J."/>
            <person name="Xue Y."/>
            <person name="Zhu Y."/>
            <person name="Xu X."/>
            <person name="Sun L."/>
            <person name="Chen S."/>
            <person name="Nie H."/>
            <person name="Peng J."/>
            <person name="Xu J."/>
            <person name="Wang Y."/>
            <person name="Yuan Z."/>
            <person name="Wen Y."/>
            <person name="Yao Z."/>
            <person name="Shen Y."/>
            <person name="Qiang B."/>
            <person name="Hou Y."/>
            <person name="Yu J."/>
            <person name="Jin Q."/>
        </authorList>
    </citation>
    <scope>NUCLEOTIDE SEQUENCE [LARGE SCALE GENOMIC DNA]</scope>
    <source>
        <strain>Sd197</strain>
    </source>
</reference>
<dbReference type="EC" id="3.5.1.108" evidence="1"/>
<dbReference type="EMBL" id="CP000034">
    <property type="protein sequence ID" value="ABB60361.1"/>
    <property type="molecule type" value="Genomic_DNA"/>
</dbReference>
<dbReference type="RefSeq" id="WP_000595482.1">
    <property type="nucleotide sequence ID" value="NC_007606.1"/>
</dbReference>
<dbReference type="RefSeq" id="YP_401850.1">
    <property type="nucleotide sequence ID" value="NC_007606.1"/>
</dbReference>
<dbReference type="SMR" id="Q32JZ6"/>
<dbReference type="STRING" id="300267.SDY_0126"/>
<dbReference type="EnsemblBacteria" id="ABB60361">
    <property type="protein sequence ID" value="ABB60361"/>
    <property type="gene ID" value="SDY_0126"/>
</dbReference>
<dbReference type="GeneID" id="93777338"/>
<dbReference type="KEGG" id="sdy:SDY_0126"/>
<dbReference type="PATRIC" id="fig|300267.13.peg.145"/>
<dbReference type="HOGENOM" id="CLU_046528_1_0_6"/>
<dbReference type="UniPathway" id="UPA00359">
    <property type="reaction ID" value="UER00478"/>
</dbReference>
<dbReference type="Proteomes" id="UP000002716">
    <property type="component" value="Chromosome"/>
</dbReference>
<dbReference type="GO" id="GO:0016020">
    <property type="term" value="C:membrane"/>
    <property type="evidence" value="ECO:0007669"/>
    <property type="project" value="GOC"/>
</dbReference>
<dbReference type="GO" id="GO:0046872">
    <property type="term" value="F:metal ion binding"/>
    <property type="evidence" value="ECO:0007669"/>
    <property type="project" value="UniProtKB-KW"/>
</dbReference>
<dbReference type="GO" id="GO:0103117">
    <property type="term" value="F:UDP-3-O-acyl-N-acetylglucosamine deacetylase activity"/>
    <property type="evidence" value="ECO:0007669"/>
    <property type="project" value="UniProtKB-UniRule"/>
</dbReference>
<dbReference type="GO" id="GO:0009245">
    <property type="term" value="P:lipid A biosynthetic process"/>
    <property type="evidence" value="ECO:0007669"/>
    <property type="project" value="UniProtKB-UniRule"/>
</dbReference>
<dbReference type="FunFam" id="3.30.1700.10:FF:000001">
    <property type="entry name" value="UDP-3-O-acyl-N-acetylglucosamine deacetylase"/>
    <property type="match status" value="1"/>
</dbReference>
<dbReference type="FunFam" id="3.30.230.20:FF:000001">
    <property type="entry name" value="UDP-3-O-acyl-N-acetylglucosamine deacetylase"/>
    <property type="match status" value="1"/>
</dbReference>
<dbReference type="Gene3D" id="3.30.230.20">
    <property type="entry name" value="lpxc deacetylase, domain 1"/>
    <property type="match status" value="1"/>
</dbReference>
<dbReference type="Gene3D" id="3.30.1700.10">
    <property type="entry name" value="lpxc deacetylase, domain 2"/>
    <property type="match status" value="1"/>
</dbReference>
<dbReference type="HAMAP" id="MF_00388">
    <property type="entry name" value="LpxC"/>
    <property type="match status" value="1"/>
</dbReference>
<dbReference type="InterPro" id="IPR020568">
    <property type="entry name" value="Ribosomal_Su5_D2-typ_SF"/>
</dbReference>
<dbReference type="InterPro" id="IPR004463">
    <property type="entry name" value="UDP-acyl_GlcNac_deAcase"/>
</dbReference>
<dbReference type="InterPro" id="IPR011334">
    <property type="entry name" value="UDP-acyl_GlcNac_deAcase_C"/>
</dbReference>
<dbReference type="InterPro" id="IPR015870">
    <property type="entry name" value="UDP-acyl_N-AcGlcN_deAcase_N"/>
</dbReference>
<dbReference type="NCBIfam" id="TIGR00325">
    <property type="entry name" value="lpxC"/>
    <property type="match status" value="1"/>
</dbReference>
<dbReference type="PANTHER" id="PTHR33694">
    <property type="entry name" value="UDP-3-O-ACYL-N-ACETYLGLUCOSAMINE DEACETYLASE 1, MITOCHONDRIAL-RELATED"/>
    <property type="match status" value="1"/>
</dbReference>
<dbReference type="PANTHER" id="PTHR33694:SF1">
    <property type="entry name" value="UDP-3-O-ACYL-N-ACETYLGLUCOSAMINE DEACETYLASE 1, MITOCHONDRIAL-RELATED"/>
    <property type="match status" value="1"/>
</dbReference>
<dbReference type="Pfam" id="PF03331">
    <property type="entry name" value="LpxC"/>
    <property type="match status" value="1"/>
</dbReference>
<dbReference type="SUPFAM" id="SSF54211">
    <property type="entry name" value="Ribosomal protein S5 domain 2-like"/>
    <property type="match status" value="2"/>
</dbReference>
<protein>
    <recommendedName>
        <fullName evidence="1">UDP-3-O-acyl-N-acetylglucosamine deacetylase</fullName>
        <shortName evidence="1">UDP-3-O-acyl-GlcNAc deacetylase</shortName>
        <ecNumber evidence="1">3.5.1.108</ecNumber>
    </recommendedName>
    <alternativeName>
        <fullName evidence="1">UDP-3-O-[R-3-hydroxymyristoyl]-N-acetylglucosamine deacetylase</fullName>
    </alternativeName>
</protein>
<sequence>MIKQRTLKRIVQATGVGLHTGKKVTLTLRPAPANTGVIYRRTDLNPPVDFPADAKSVRDTMLCTCLVNEHDVRISTVEHLNAALAGLGIDNIVIEVNAPEIPIMDGSAAPFVYLLLDAGIDELNCAKKFVRIKETVRVEDGDKWAEFKPYNGFSLDFTIDFNHPAIDSSNQRYAMNFSADAFMRQISRARTFGFMRDIEYLQSRGLCLGGSFDCAIVVDDYRVLNEDGLRFEDEFVRHKMLDAIGDLFMCGHNIIGAFTAYKSGHALNNKLLQAVLAKQEAWEYVTFQDDAELPLAFKAPSAVLA</sequence>
<keyword id="KW-0378">Hydrolase</keyword>
<keyword id="KW-0441">Lipid A biosynthesis</keyword>
<keyword id="KW-0444">Lipid biosynthesis</keyword>
<keyword id="KW-0443">Lipid metabolism</keyword>
<keyword id="KW-0479">Metal-binding</keyword>
<keyword id="KW-1185">Reference proteome</keyword>
<keyword id="KW-0862">Zinc</keyword>
<proteinExistence type="inferred from homology"/>
<comment type="function">
    <text evidence="1">Catalyzes the hydrolysis of UDP-3-O-myristoyl-N-acetylglucosamine to form UDP-3-O-myristoylglucosamine and acetate, the committed step in lipid A biosynthesis.</text>
</comment>
<comment type="catalytic activity">
    <reaction evidence="1">
        <text>a UDP-3-O-[(3R)-3-hydroxyacyl]-N-acetyl-alpha-D-glucosamine + H2O = a UDP-3-O-[(3R)-3-hydroxyacyl]-alpha-D-glucosamine + acetate</text>
        <dbReference type="Rhea" id="RHEA:67816"/>
        <dbReference type="ChEBI" id="CHEBI:15377"/>
        <dbReference type="ChEBI" id="CHEBI:30089"/>
        <dbReference type="ChEBI" id="CHEBI:137740"/>
        <dbReference type="ChEBI" id="CHEBI:173225"/>
        <dbReference type="EC" id="3.5.1.108"/>
    </reaction>
</comment>
<comment type="cofactor">
    <cofactor evidence="1">
        <name>Zn(2+)</name>
        <dbReference type="ChEBI" id="CHEBI:29105"/>
    </cofactor>
</comment>
<comment type="pathway">
    <text evidence="1">Glycolipid biosynthesis; lipid IV(A) biosynthesis; lipid IV(A) from (3R)-3-hydroxytetradecanoyl-[acyl-carrier-protein] and UDP-N-acetyl-alpha-D-glucosamine: step 2/6.</text>
</comment>
<comment type="similarity">
    <text evidence="1">Belongs to the LpxC family.</text>
</comment>
<feature type="chain" id="PRO_0000253695" description="UDP-3-O-acyl-N-acetylglucosamine deacetylase">
    <location>
        <begin position="1"/>
        <end position="305"/>
    </location>
</feature>
<feature type="active site" description="Proton donor" evidence="1">
    <location>
        <position position="265"/>
    </location>
</feature>
<feature type="binding site" evidence="1">
    <location>
        <position position="79"/>
    </location>
    <ligand>
        <name>Zn(2+)</name>
        <dbReference type="ChEBI" id="CHEBI:29105"/>
    </ligand>
</feature>
<feature type="binding site" evidence="1">
    <location>
        <position position="238"/>
    </location>
    <ligand>
        <name>Zn(2+)</name>
        <dbReference type="ChEBI" id="CHEBI:29105"/>
    </ligand>
</feature>
<feature type="binding site" evidence="1">
    <location>
        <position position="242"/>
    </location>
    <ligand>
        <name>Zn(2+)</name>
        <dbReference type="ChEBI" id="CHEBI:29105"/>
    </ligand>
</feature>
<accession>Q32JZ6</accession>
<name>LPXC_SHIDS</name>
<gene>
    <name evidence="1" type="primary">lpxC</name>
    <name type="ordered locus">SDY_0126</name>
</gene>
<evidence type="ECO:0000255" key="1">
    <source>
        <dbReference type="HAMAP-Rule" id="MF_00388"/>
    </source>
</evidence>